<gene>
    <name evidence="1" type="primary">sepF2</name>
    <name type="ordered locus">SCO2079</name>
    <name type="ORF">SC4A10.12c</name>
</gene>
<dbReference type="EMBL" id="AL939111">
    <property type="protein sequence ID" value="CAB51988.1"/>
    <property type="molecule type" value="Genomic_DNA"/>
</dbReference>
<dbReference type="PIR" id="T34949">
    <property type="entry name" value="T34949"/>
</dbReference>
<dbReference type="RefSeq" id="NP_626338.1">
    <property type="nucleotide sequence ID" value="NC_003888.3"/>
</dbReference>
<dbReference type="RefSeq" id="WP_003976736.1">
    <property type="nucleotide sequence ID" value="NZ_VNID01000001.1"/>
</dbReference>
<dbReference type="SMR" id="Q9S2X2"/>
<dbReference type="STRING" id="100226.gene:17759677"/>
<dbReference type="PaxDb" id="100226-SCO2079"/>
<dbReference type="DNASU" id="1097513"/>
<dbReference type="KEGG" id="sco:SCO2079"/>
<dbReference type="PATRIC" id="fig|100226.15.peg.2112"/>
<dbReference type="eggNOG" id="COG1799">
    <property type="taxonomic scope" value="Bacteria"/>
</dbReference>
<dbReference type="HOGENOM" id="CLU_078499_0_0_11"/>
<dbReference type="InParanoid" id="Q9S2X2"/>
<dbReference type="OrthoDB" id="3731101at2"/>
<dbReference type="PhylomeDB" id="Q9S2X2"/>
<dbReference type="Proteomes" id="UP000001973">
    <property type="component" value="Chromosome"/>
</dbReference>
<dbReference type="GO" id="GO:0005737">
    <property type="term" value="C:cytoplasm"/>
    <property type="evidence" value="ECO:0007669"/>
    <property type="project" value="UniProtKB-SubCell"/>
</dbReference>
<dbReference type="GO" id="GO:0000917">
    <property type="term" value="P:division septum assembly"/>
    <property type="evidence" value="ECO:0007669"/>
    <property type="project" value="UniProtKB-KW"/>
</dbReference>
<dbReference type="GO" id="GO:0043093">
    <property type="term" value="P:FtsZ-dependent cytokinesis"/>
    <property type="evidence" value="ECO:0007669"/>
    <property type="project" value="UniProtKB-UniRule"/>
</dbReference>
<dbReference type="Gene3D" id="3.30.110.150">
    <property type="entry name" value="SepF-like protein"/>
    <property type="match status" value="1"/>
</dbReference>
<dbReference type="HAMAP" id="MF_01197">
    <property type="entry name" value="SepF"/>
    <property type="match status" value="1"/>
</dbReference>
<dbReference type="InterPro" id="IPR023052">
    <property type="entry name" value="Cell_div_SepF"/>
</dbReference>
<dbReference type="InterPro" id="IPR007561">
    <property type="entry name" value="Cell_div_SepF/SepF-rel"/>
</dbReference>
<dbReference type="InterPro" id="IPR038594">
    <property type="entry name" value="SepF-like_sf"/>
</dbReference>
<dbReference type="PANTHER" id="PTHR35798">
    <property type="entry name" value="CELL DIVISION PROTEIN SEPF"/>
    <property type="match status" value="1"/>
</dbReference>
<dbReference type="PANTHER" id="PTHR35798:SF1">
    <property type="entry name" value="CELL DIVISION PROTEIN SEPF"/>
    <property type="match status" value="1"/>
</dbReference>
<dbReference type="Pfam" id="PF04472">
    <property type="entry name" value="SepF"/>
    <property type="match status" value="1"/>
</dbReference>
<keyword id="KW-0131">Cell cycle</keyword>
<keyword id="KW-0132">Cell division</keyword>
<keyword id="KW-0963">Cytoplasm</keyword>
<keyword id="KW-1185">Reference proteome</keyword>
<keyword id="KW-0717">Septation</keyword>
<organism>
    <name type="scientific">Streptomyces coelicolor (strain ATCC BAA-471 / A3(2) / M145)</name>
    <dbReference type="NCBI Taxonomy" id="100226"/>
    <lineage>
        <taxon>Bacteria</taxon>
        <taxon>Bacillati</taxon>
        <taxon>Actinomycetota</taxon>
        <taxon>Actinomycetes</taxon>
        <taxon>Kitasatosporales</taxon>
        <taxon>Streptomycetaceae</taxon>
        <taxon>Streptomyces</taxon>
        <taxon>Streptomyces albidoflavus group</taxon>
    </lineage>
</organism>
<proteinExistence type="inferred from homology"/>
<evidence type="ECO:0000255" key="1">
    <source>
        <dbReference type="HAMAP-Rule" id="MF_01197"/>
    </source>
</evidence>
<evidence type="ECO:0000256" key="2">
    <source>
        <dbReference type="SAM" id="MobiDB-lite"/>
    </source>
</evidence>
<feature type="chain" id="PRO_0000334119" description="Cell division protein SepF 2">
    <location>
        <begin position="1"/>
        <end position="213"/>
    </location>
</feature>
<feature type="region of interest" description="Disordered" evidence="2">
    <location>
        <begin position="16"/>
        <end position="89"/>
    </location>
</feature>
<feature type="compositionally biased region" description="Acidic residues" evidence="2">
    <location>
        <begin position="27"/>
        <end position="39"/>
    </location>
</feature>
<sequence length="213" mass="23723">MAGAMRKMAVYLGLVEDDGYDGRGFDPDDDFEPELDPEPERDHRRHEPAHQSHGAHQSQRDEEVRVVQPPAQREPMPRAASLAAESSRPARIAPVASITQERASLEKSAPVIMPKVVSEREPYRITTLHPRTYNEARTIGEHFREGTPVIMNLTEMDDTDAKRLVDFAAGLVFGLHGSIERVTQKVFLLSPANVDVTAEDKARIAEGGFFNQS</sequence>
<accession>Q9S2X2</accession>
<name>SEPF2_STRCO</name>
<reference key="1">
    <citation type="journal article" date="2002" name="Nature">
        <title>Complete genome sequence of the model actinomycete Streptomyces coelicolor A3(2).</title>
        <authorList>
            <person name="Bentley S.D."/>
            <person name="Chater K.F."/>
            <person name="Cerdeno-Tarraga A.-M."/>
            <person name="Challis G.L."/>
            <person name="Thomson N.R."/>
            <person name="James K.D."/>
            <person name="Harris D.E."/>
            <person name="Quail M.A."/>
            <person name="Kieser H."/>
            <person name="Harper D."/>
            <person name="Bateman A."/>
            <person name="Brown S."/>
            <person name="Chandra G."/>
            <person name="Chen C.W."/>
            <person name="Collins M."/>
            <person name="Cronin A."/>
            <person name="Fraser A."/>
            <person name="Goble A."/>
            <person name="Hidalgo J."/>
            <person name="Hornsby T."/>
            <person name="Howarth S."/>
            <person name="Huang C.-H."/>
            <person name="Kieser T."/>
            <person name="Larke L."/>
            <person name="Murphy L.D."/>
            <person name="Oliver K."/>
            <person name="O'Neil S."/>
            <person name="Rabbinowitsch E."/>
            <person name="Rajandream M.A."/>
            <person name="Rutherford K.M."/>
            <person name="Rutter S."/>
            <person name="Seeger K."/>
            <person name="Saunders D."/>
            <person name="Sharp S."/>
            <person name="Squares R."/>
            <person name="Squares S."/>
            <person name="Taylor K."/>
            <person name="Warren T."/>
            <person name="Wietzorrek A."/>
            <person name="Woodward J.R."/>
            <person name="Barrell B.G."/>
            <person name="Parkhill J."/>
            <person name="Hopwood D.A."/>
        </authorList>
    </citation>
    <scope>NUCLEOTIDE SEQUENCE [LARGE SCALE GENOMIC DNA]</scope>
    <source>
        <strain>ATCC BAA-471 / A3(2) / M145</strain>
    </source>
</reference>
<protein>
    <recommendedName>
        <fullName evidence="1">Cell division protein SepF 2</fullName>
    </recommendedName>
</protein>
<comment type="function">
    <text evidence="1">Cell division protein that is part of the divisome complex and is recruited early to the Z-ring. Probably stimulates Z-ring formation, perhaps through the cross-linking of FtsZ protofilaments. Its function overlaps with FtsA.</text>
</comment>
<comment type="subunit">
    <text evidence="1">Homodimer. Interacts with FtsZ.</text>
</comment>
<comment type="subcellular location">
    <subcellularLocation>
        <location evidence="1">Cytoplasm</location>
    </subcellularLocation>
    <text evidence="1">Localizes to the division site, in a FtsZ-dependent manner.</text>
</comment>
<comment type="similarity">
    <text evidence="1">Belongs to the SepF family.</text>
</comment>